<organismHost>
    <name type="scientific">Ornithodoros</name>
    <name type="common">relapsing fever ticks</name>
    <dbReference type="NCBI Taxonomy" id="6937"/>
</organismHost>
<organismHost>
    <name type="scientific">Phacochoerus aethiopicus</name>
    <name type="common">Warthog</name>
    <dbReference type="NCBI Taxonomy" id="85517"/>
</organismHost>
<organismHost>
    <name type="scientific">Phacochoerus africanus</name>
    <name type="common">Warthog</name>
    <dbReference type="NCBI Taxonomy" id="41426"/>
</organismHost>
<organismHost>
    <name type="scientific">Potamochoerus larvatus</name>
    <name type="common">Bushpig</name>
    <dbReference type="NCBI Taxonomy" id="273792"/>
</organismHost>
<organismHost>
    <name type="scientific">Sus scrofa</name>
    <name type="common">Pig</name>
    <dbReference type="NCBI Taxonomy" id="9823"/>
</organismHost>
<accession>P0C752</accession>
<protein>
    <recommendedName>
        <fullName>Uncharacterized protein B354L</fullName>
        <shortName>pB354L</shortName>
    </recommendedName>
</protein>
<keyword id="KW-0426">Late protein</keyword>
<feature type="chain" id="PRO_0000379082" description="Uncharacterized protein B354L">
    <location>
        <begin position="1"/>
        <end position="354"/>
    </location>
</feature>
<organism>
    <name type="scientific">African swine fever virus (isolate Tick/Malawi/Lil 20-1/1983)</name>
    <name type="common">ASFV</name>
    <dbReference type="NCBI Taxonomy" id="10500"/>
    <lineage>
        <taxon>Viruses</taxon>
        <taxon>Varidnaviria</taxon>
        <taxon>Bamfordvirae</taxon>
        <taxon>Nucleocytoviricota</taxon>
        <taxon>Pokkesviricetes</taxon>
        <taxon>Asfuvirales</taxon>
        <taxon>Asfarviridae</taxon>
        <taxon>Asfivirus</taxon>
        <taxon>African swine fever virus</taxon>
    </lineage>
</organism>
<gene>
    <name type="ordered locus">Mal-086</name>
</gene>
<reference key="1">
    <citation type="submission" date="2003-03" db="EMBL/GenBank/DDBJ databases">
        <title>African swine fever virus genomes.</title>
        <authorList>
            <person name="Kutish G.F."/>
            <person name="Rock D.L."/>
        </authorList>
    </citation>
    <scope>NUCLEOTIDE SEQUENCE [LARGE SCALE GENOMIC DNA]</scope>
</reference>
<sequence>MALTTHSGKLIPELQFKAHHFIDKTTVLYGPSKTGKTVYVKHIMKILQPHIEQILVVAPSEPSNRSYEGFVHPTLIHYRLWLADKQKKNDNKGAERFLEAIWQRQTMMSSIYSRVNNIDMLKTLYHKLPIDIQQKENKNIAKVECLKAEQTDQKKEEKITSLYQQLLKKIIIQNIHMYKNLCLTEDEKFTLNYINLNPRLLLILDDCAAELHPLFTKEIFKKFFYQNRHCFISMIICCQDDTDLPANLRKNAFVSIFTNASICMSNFSRQSNRYSKQDKEYVEEISHIVFKGYRKLVYIREDENRQHFYHSTVPLPTAFSFGSKALLKLCKAVYSKEVVIDKSNPYWSKFRLNF</sequence>
<name>VF354_ASFM2</name>
<dbReference type="EMBL" id="AY261361">
    <property type="status" value="NOT_ANNOTATED_CDS"/>
    <property type="molecule type" value="Genomic_DNA"/>
</dbReference>
<dbReference type="Proteomes" id="UP000000860">
    <property type="component" value="Segment"/>
</dbReference>
<dbReference type="InterPro" id="IPR027417">
    <property type="entry name" value="P-loop_NTPase"/>
</dbReference>
<dbReference type="SUPFAM" id="SSF52540">
    <property type="entry name" value="P-loop containing nucleoside triphosphate hydrolases"/>
    <property type="match status" value="2"/>
</dbReference>
<comment type="induction">
    <text evidence="1">Expressed in the late phase of the viral replicative cycle.</text>
</comment>
<comment type="similarity">
    <text evidence="1">Belongs to the asfivirus B354L family.</text>
</comment>
<proteinExistence type="inferred from homology"/>
<evidence type="ECO:0000305" key="1"/>